<comment type="function">
    <text evidence="1">Responsible for the transport of dicarboxylates such as succinate, fumarate, and malate from the periplasm across the membrane.</text>
</comment>
<comment type="subcellular location">
    <subcellularLocation>
        <location evidence="1">Cell inner membrane</location>
        <topology evidence="1">Multi-pass membrane protein</topology>
    </subcellularLocation>
</comment>
<comment type="similarity">
    <text evidence="1">Belongs to the dicarboxylate/amino acid:cation symporter (DAACS) (TC 2.A.23) family.</text>
</comment>
<proteinExistence type="inferred from homology"/>
<organism>
    <name type="scientific">Salmonella paratyphi A (strain ATCC 9150 / SARB42)</name>
    <dbReference type="NCBI Taxonomy" id="295319"/>
    <lineage>
        <taxon>Bacteria</taxon>
        <taxon>Pseudomonadati</taxon>
        <taxon>Pseudomonadota</taxon>
        <taxon>Gammaproteobacteria</taxon>
        <taxon>Enterobacterales</taxon>
        <taxon>Enterobacteriaceae</taxon>
        <taxon>Salmonella</taxon>
    </lineage>
</organism>
<name>DCTA_SALPA</name>
<keyword id="KW-0997">Cell inner membrane</keyword>
<keyword id="KW-1003">Cell membrane</keyword>
<keyword id="KW-0472">Membrane</keyword>
<keyword id="KW-0769">Symport</keyword>
<keyword id="KW-0812">Transmembrane</keyword>
<keyword id="KW-1133">Transmembrane helix</keyword>
<keyword id="KW-0813">Transport</keyword>
<dbReference type="EMBL" id="CP000026">
    <property type="protein sequence ID" value="AAV79279.1"/>
    <property type="molecule type" value="Genomic_DNA"/>
</dbReference>
<dbReference type="RefSeq" id="WP_000858230.1">
    <property type="nucleotide sequence ID" value="NC_006511.1"/>
</dbReference>
<dbReference type="SMR" id="Q5PJR1"/>
<dbReference type="KEGG" id="spt:SPA3470"/>
<dbReference type="HOGENOM" id="CLU_019375_7_0_6"/>
<dbReference type="Proteomes" id="UP000008185">
    <property type="component" value="Chromosome"/>
</dbReference>
<dbReference type="GO" id="GO:0005886">
    <property type="term" value="C:plasma membrane"/>
    <property type="evidence" value="ECO:0007669"/>
    <property type="project" value="UniProtKB-SubCell"/>
</dbReference>
<dbReference type="GO" id="GO:0015138">
    <property type="term" value="F:fumarate transmembrane transporter activity"/>
    <property type="evidence" value="ECO:0007669"/>
    <property type="project" value="TreeGrafter"/>
</dbReference>
<dbReference type="GO" id="GO:0015366">
    <property type="term" value="F:malate:proton symporter activity"/>
    <property type="evidence" value="ECO:0007669"/>
    <property type="project" value="TreeGrafter"/>
</dbReference>
<dbReference type="GO" id="GO:0015141">
    <property type="term" value="F:succinate transmembrane transporter activity"/>
    <property type="evidence" value="ECO:0007669"/>
    <property type="project" value="TreeGrafter"/>
</dbReference>
<dbReference type="GO" id="GO:0070778">
    <property type="term" value="P:L-aspartate transmembrane transport"/>
    <property type="evidence" value="ECO:0007669"/>
    <property type="project" value="TreeGrafter"/>
</dbReference>
<dbReference type="FunFam" id="1.10.3860.10:FF:000001">
    <property type="entry name" value="C4-dicarboxylate transport protein"/>
    <property type="match status" value="1"/>
</dbReference>
<dbReference type="Gene3D" id="1.10.3860.10">
    <property type="entry name" value="Sodium:dicarboxylate symporter"/>
    <property type="match status" value="1"/>
</dbReference>
<dbReference type="HAMAP" id="MF_01300">
    <property type="entry name" value="C4_dicarb_transport"/>
    <property type="match status" value="1"/>
</dbReference>
<dbReference type="InterPro" id="IPR023954">
    <property type="entry name" value="C4_dicarb_transport"/>
</dbReference>
<dbReference type="InterPro" id="IPR001991">
    <property type="entry name" value="Na-dicarboxylate_symporter"/>
</dbReference>
<dbReference type="InterPro" id="IPR018107">
    <property type="entry name" value="Na-dicarboxylate_symporter_CS"/>
</dbReference>
<dbReference type="InterPro" id="IPR036458">
    <property type="entry name" value="Na:dicarbo_symporter_sf"/>
</dbReference>
<dbReference type="NCBIfam" id="NF002461">
    <property type="entry name" value="PRK01663.1"/>
    <property type="match status" value="1"/>
</dbReference>
<dbReference type="NCBIfam" id="NF009587">
    <property type="entry name" value="PRK13027.1"/>
    <property type="match status" value="1"/>
</dbReference>
<dbReference type="PANTHER" id="PTHR42865:SF1">
    <property type="entry name" value="AEROBIC C4-DICARBOXYLATE TRANSPORT PROTEIN"/>
    <property type="match status" value="1"/>
</dbReference>
<dbReference type="PANTHER" id="PTHR42865">
    <property type="entry name" value="PROTON/GLUTAMATE-ASPARTATE SYMPORTER"/>
    <property type="match status" value="1"/>
</dbReference>
<dbReference type="Pfam" id="PF00375">
    <property type="entry name" value="SDF"/>
    <property type="match status" value="1"/>
</dbReference>
<dbReference type="PRINTS" id="PR00173">
    <property type="entry name" value="EDTRNSPORT"/>
</dbReference>
<dbReference type="SUPFAM" id="SSF118215">
    <property type="entry name" value="Proton glutamate symport protein"/>
    <property type="match status" value="1"/>
</dbReference>
<dbReference type="PROSITE" id="PS00713">
    <property type="entry name" value="NA_DICARBOXYL_SYMP_1"/>
    <property type="match status" value="1"/>
</dbReference>
<dbReference type="PROSITE" id="PS00714">
    <property type="entry name" value="NA_DICARBOXYL_SYMP_2"/>
    <property type="match status" value="1"/>
</dbReference>
<feature type="chain" id="PRO_1000067463" description="C4-dicarboxylate transport protein">
    <location>
        <begin position="1"/>
        <end position="435"/>
    </location>
</feature>
<feature type="transmembrane region" description="Helical" evidence="1">
    <location>
        <begin position="4"/>
        <end position="24"/>
    </location>
</feature>
<feature type="transmembrane region" description="Helical" evidence="1">
    <location>
        <begin position="44"/>
        <end position="64"/>
    </location>
</feature>
<feature type="transmembrane region" description="Helical" evidence="1">
    <location>
        <begin position="76"/>
        <end position="96"/>
    </location>
</feature>
<feature type="transmembrane region" description="Helical" evidence="1">
    <location>
        <begin position="142"/>
        <end position="162"/>
    </location>
</feature>
<feature type="transmembrane region" description="Helical" evidence="1">
    <location>
        <begin position="184"/>
        <end position="204"/>
    </location>
</feature>
<feature type="transmembrane region" description="Helical" evidence="1">
    <location>
        <begin position="222"/>
        <end position="242"/>
    </location>
</feature>
<feature type="transmembrane region" description="Helical" evidence="1">
    <location>
        <begin position="289"/>
        <end position="309"/>
    </location>
</feature>
<feature type="transmembrane region" description="Helical" evidence="1">
    <location>
        <begin position="326"/>
        <end position="346"/>
    </location>
</feature>
<feature type="transmembrane region" description="Helical" evidence="1">
    <location>
        <begin position="352"/>
        <end position="372"/>
    </location>
</feature>
<reference key="1">
    <citation type="journal article" date="2004" name="Nat. Genet.">
        <title>Comparison of genome degradation in Paratyphi A and Typhi, human-restricted serovars of Salmonella enterica that cause typhoid.</title>
        <authorList>
            <person name="McClelland M."/>
            <person name="Sanderson K.E."/>
            <person name="Clifton S.W."/>
            <person name="Latreille P."/>
            <person name="Porwollik S."/>
            <person name="Sabo A."/>
            <person name="Meyer R."/>
            <person name="Bieri T."/>
            <person name="Ozersky P."/>
            <person name="McLellan M."/>
            <person name="Harkins C.R."/>
            <person name="Wang C."/>
            <person name="Nguyen C."/>
            <person name="Berghoff A."/>
            <person name="Elliott G."/>
            <person name="Kohlberg S."/>
            <person name="Strong C."/>
            <person name="Du F."/>
            <person name="Carter J."/>
            <person name="Kremizki C."/>
            <person name="Layman D."/>
            <person name="Leonard S."/>
            <person name="Sun H."/>
            <person name="Fulton L."/>
            <person name="Nash W."/>
            <person name="Miner T."/>
            <person name="Minx P."/>
            <person name="Delehaunty K."/>
            <person name="Fronick C."/>
            <person name="Magrini V."/>
            <person name="Nhan M."/>
            <person name="Warren W."/>
            <person name="Florea L."/>
            <person name="Spieth J."/>
            <person name="Wilson R.K."/>
        </authorList>
    </citation>
    <scope>NUCLEOTIDE SEQUENCE [LARGE SCALE GENOMIC DNA]</scope>
    <source>
        <strain>ATCC 9150 / SARB42</strain>
    </source>
</reference>
<accession>Q5PJR1</accession>
<evidence type="ECO:0000255" key="1">
    <source>
        <dbReference type="HAMAP-Rule" id="MF_01300"/>
    </source>
</evidence>
<gene>
    <name evidence="1" type="primary">dctA</name>
    <name type="ordered locus">SPA3470</name>
</gene>
<protein>
    <recommendedName>
        <fullName evidence="1">C4-dicarboxylate transport protein</fullName>
    </recommendedName>
</protein>
<sequence>MKTSLFKSLYFQVLTAIAIGILLGHYYPELGAQMKPLGDAFVKLIKMIIAPVIFCTVVTGIAGMESMKAVGRTGAVALLYFEIVSTIALIIGLIIVNVVQPGAGMNVDPATLDAQAVAVYAAQAKEQGIIAFLMDVIPGSVIGAFASGNILQVLLFAVLFGFALHRLGSKGQLIFNVIESFSQVIFGIINMIMRLAPIGAFGAMAFTIGKYGVGSLVQLGQLIICFYITCILFVVVVLGTIARVTGFSIFKFIRYIREELLIVLGTSSSESALPRMLDKMEKLGCRKSVVGLVIPTGYSFNLDGTSIYLTMAAVFIAQATNSHMDIFHQITLLVVLLLSSKGVAGVTGSGFIVLAATISAVGHLPVAGLALILGIDRFMSEARALTNLVGNGVATVVVAKWVKELDHQKLDDVLNNRAPDGKTHEISSYSRHLCP</sequence>